<protein>
    <recommendedName>
        <fullName evidence="1">Phosphopantetheine adenylyltransferase</fullName>
        <ecNumber evidence="1">2.7.7.3</ecNumber>
    </recommendedName>
    <alternativeName>
        <fullName evidence="1">Dephospho-CoA pyrophosphorylase</fullName>
    </alternativeName>
    <alternativeName>
        <fullName evidence="1">Pantetheine-phosphate adenylyltransferase</fullName>
        <shortName evidence="1">PPAT</shortName>
    </alternativeName>
</protein>
<evidence type="ECO:0000255" key="1">
    <source>
        <dbReference type="HAMAP-Rule" id="MF_00151"/>
    </source>
</evidence>
<proteinExistence type="inferred from homology"/>
<gene>
    <name evidence="1" type="primary">coaD</name>
    <name type="ordered locus">COSY_0345</name>
</gene>
<accession>A5CX55</accession>
<dbReference type="EC" id="2.7.7.3" evidence="1"/>
<dbReference type="EMBL" id="AP009247">
    <property type="protein sequence ID" value="BAF61470.1"/>
    <property type="molecule type" value="Genomic_DNA"/>
</dbReference>
<dbReference type="RefSeq" id="WP_011929740.1">
    <property type="nucleotide sequence ID" value="NC_009465.1"/>
</dbReference>
<dbReference type="SMR" id="A5CX55"/>
<dbReference type="STRING" id="412965.COSY_0345"/>
<dbReference type="KEGG" id="vok:COSY_0345"/>
<dbReference type="eggNOG" id="COG0669">
    <property type="taxonomic scope" value="Bacteria"/>
</dbReference>
<dbReference type="HOGENOM" id="CLU_100149_0_1_6"/>
<dbReference type="OrthoDB" id="9806661at2"/>
<dbReference type="UniPathway" id="UPA00241">
    <property type="reaction ID" value="UER00355"/>
</dbReference>
<dbReference type="Proteomes" id="UP000000247">
    <property type="component" value="Chromosome"/>
</dbReference>
<dbReference type="GO" id="GO:0005737">
    <property type="term" value="C:cytoplasm"/>
    <property type="evidence" value="ECO:0007669"/>
    <property type="project" value="UniProtKB-SubCell"/>
</dbReference>
<dbReference type="GO" id="GO:0005524">
    <property type="term" value="F:ATP binding"/>
    <property type="evidence" value="ECO:0007669"/>
    <property type="project" value="UniProtKB-KW"/>
</dbReference>
<dbReference type="GO" id="GO:0004595">
    <property type="term" value="F:pantetheine-phosphate adenylyltransferase activity"/>
    <property type="evidence" value="ECO:0007669"/>
    <property type="project" value="UniProtKB-UniRule"/>
</dbReference>
<dbReference type="GO" id="GO:0015937">
    <property type="term" value="P:coenzyme A biosynthetic process"/>
    <property type="evidence" value="ECO:0007669"/>
    <property type="project" value="UniProtKB-UniRule"/>
</dbReference>
<dbReference type="CDD" id="cd02163">
    <property type="entry name" value="PPAT"/>
    <property type="match status" value="1"/>
</dbReference>
<dbReference type="Gene3D" id="3.40.50.620">
    <property type="entry name" value="HUPs"/>
    <property type="match status" value="1"/>
</dbReference>
<dbReference type="HAMAP" id="MF_00151">
    <property type="entry name" value="PPAT_bact"/>
    <property type="match status" value="1"/>
</dbReference>
<dbReference type="InterPro" id="IPR004821">
    <property type="entry name" value="Cyt_trans-like"/>
</dbReference>
<dbReference type="InterPro" id="IPR001980">
    <property type="entry name" value="PPAT"/>
</dbReference>
<dbReference type="InterPro" id="IPR014729">
    <property type="entry name" value="Rossmann-like_a/b/a_fold"/>
</dbReference>
<dbReference type="NCBIfam" id="TIGR01510">
    <property type="entry name" value="coaD_prev_kdtB"/>
    <property type="match status" value="1"/>
</dbReference>
<dbReference type="NCBIfam" id="TIGR00125">
    <property type="entry name" value="cyt_tran_rel"/>
    <property type="match status" value="1"/>
</dbReference>
<dbReference type="PANTHER" id="PTHR21342">
    <property type="entry name" value="PHOSPHOPANTETHEINE ADENYLYLTRANSFERASE"/>
    <property type="match status" value="1"/>
</dbReference>
<dbReference type="PANTHER" id="PTHR21342:SF1">
    <property type="entry name" value="PHOSPHOPANTETHEINE ADENYLYLTRANSFERASE"/>
    <property type="match status" value="1"/>
</dbReference>
<dbReference type="Pfam" id="PF01467">
    <property type="entry name" value="CTP_transf_like"/>
    <property type="match status" value="1"/>
</dbReference>
<dbReference type="PRINTS" id="PR01020">
    <property type="entry name" value="LPSBIOSNTHSS"/>
</dbReference>
<dbReference type="SUPFAM" id="SSF52374">
    <property type="entry name" value="Nucleotidylyl transferase"/>
    <property type="match status" value="1"/>
</dbReference>
<name>COAD_VESOH</name>
<comment type="function">
    <text evidence="1">Reversibly transfers an adenylyl group from ATP to 4'-phosphopantetheine, yielding dephospho-CoA (dPCoA) and pyrophosphate.</text>
</comment>
<comment type="catalytic activity">
    <reaction evidence="1">
        <text>(R)-4'-phosphopantetheine + ATP + H(+) = 3'-dephospho-CoA + diphosphate</text>
        <dbReference type="Rhea" id="RHEA:19801"/>
        <dbReference type="ChEBI" id="CHEBI:15378"/>
        <dbReference type="ChEBI" id="CHEBI:30616"/>
        <dbReference type="ChEBI" id="CHEBI:33019"/>
        <dbReference type="ChEBI" id="CHEBI:57328"/>
        <dbReference type="ChEBI" id="CHEBI:61723"/>
        <dbReference type="EC" id="2.7.7.3"/>
    </reaction>
</comment>
<comment type="cofactor">
    <cofactor evidence="1">
        <name>Mg(2+)</name>
        <dbReference type="ChEBI" id="CHEBI:18420"/>
    </cofactor>
</comment>
<comment type="pathway">
    <text evidence="1">Cofactor biosynthesis; coenzyme A biosynthesis; CoA from (R)-pantothenate: step 4/5.</text>
</comment>
<comment type="subunit">
    <text evidence="1">Homohexamer.</text>
</comment>
<comment type="subcellular location">
    <subcellularLocation>
        <location evidence="1">Cytoplasm</location>
    </subcellularLocation>
</comment>
<comment type="similarity">
    <text evidence="1">Belongs to the bacterial CoaD family.</text>
</comment>
<reference key="1">
    <citation type="journal article" date="2007" name="Curr. Biol.">
        <title>Reduced genome of the thioautotrophic intracellular symbiont in a deep-sea clam, Calyptogena okutanii.</title>
        <authorList>
            <person name="Kuwahara H."/>
            <person name="Yoshida T."/>
            <person name="Takaki Y."/>
            <person name="Shimamura S."/>
            <person name="Nishi S."/>
            <person name="Harada M."/>
            <person name="Matsuyama K."/>
            <person name="Takishita K."/>
            <person name="Kawato M."/>
            <person name="Uematsu K."/>
            <person name="Fujiwara Y."/>
            <person name="Sato T."/>
            <person name="Kato C."/>
            <person name="Kitagawa M."/>
            <person name="Kato I."/>
            <person name="Maruyama T."/>
        </authorList>
    </citation>
    <scope>NUCLEOTIDE SEQUENCE [LARGE SCALE GENOMIC DNA]</scope>
    <source>
        <strain>HA</strain>
    </source>
</reference>
<organism>
    <name type="scientific">Vesicomyosocius okutanii subsp. Calyptogena okutanii (strain HA)</name>
    <dbReference type="NCBI Taxonomy" id="412965"/>
    <lineage>
        <taxon>Bacteria</taxon>
        <taxon>Pseudomonadati</taxon>
        <taxon>Pseudomonadota</taxon>
        <taxon>Gammaproteobacteria</taxon>
        <taxon>Candidatus Pseudothioglobaceae</taxon>
        <taxon>Candidatus Vesicomyosocius</taxon>
    </lineage>
</organism>
<feature type="chain" id="PRO_1000011274" description="Phosphopantetheine adenylyltransferase">
    <location>
        <begin position="1"/>
        <end position="158"/>
    </location>
</feature>
<feature type="binding site" evidence="1">
    <location>
        <begin position="10"/>
        <end position="11"/>
    </location>
    <ligand>
        <name>ATP</name>
        <dbReference type="ChEBI" id="CHEBI:30616"/>
    </ligand>
</feature>
<feature type="binding site" evidence="1">
    <location>
        <position position="10"/>
    </location>
    <ligand>
        <name>substrate</name>
    </ligand>
</feature>
<feature type="binding site" evidence="1">
    <location>
        <position position="18"/>
    </location>
    <ligand>
        <name>ATP</name>
        <dbReference type="ChEBI" id="CHEBI:30616"/>
    </ligand>
</feature>
<feature type="binding site" evidence="1">
    <location>
        <position position="42"/>
    </location>
    <ligand>
        <name>substrate</name>
    </ligand>
</feature>
<feature type="binding site" evidence="1">
    <location>
        <position position="74"/>
    </location>
    <ligand>
        <name>substrate</name>
    </ligand>
</feature>
<feature type="binding site" evidence="1">
    <location>
        <position position="88"/>
    </location>
    <ligand>
        <name>substrate</name>
    </ligand>
</feature>
<feature type="binding site" evidence="1">
    <location>
        <begin position="89"/>
        <end position="91"/>
    </location>
    <ligand>
        <name>ATP</name>
        <dbReference type="ChEBI" id="CHEBI:30616"/>
    </ligand>
</feature>
<feature type="binding site" evidence="1">
    <location>
        <position position="99"/>
    </location>
    <ligand>
        <name>ATP</name>
        <dbReference type="ChEBI" id="CHEBI:30616"/>
    </ligand>
</feature>
<feature type="binding site" evidence="1">
    <location>
        <begin position="124"/>
        <end position="130"/>
    </location>
    <ligand>
        <name>ATP</name>
        <dbReference type="ChEBI" id="CHEBI:30616"/>
    </ligand>
</feature>
<feature type="site" description="Transition state stabilizer" evidence="1">
    <location>
        <position position="18"/>
    </location>
</feature>
<sequence length="158" mass="17677">MKKIAIYPGSFDPITNGHVDLIKRASKLFDEIIIGISQNSKKKAFLSINDRIDTINTALKDINNIRILSFDTLLVDFASLKNAQVILRGLRAISDFEYEYQLSGINKHLNPNIETLFMTPTEQYANISSSLIKEIIALGGDISVFVPASVKTLLKHRL</sequence>
<keyword id="KW-0067">ATP-binding</keyword>
<keyword id="KW-0173">Coenzyme A biosynthesis</keyword>
<keyword id="KW-0963">Cytoplasm</keyword>
<keyword id="KW-0460">Magnesium</keyword>
<keyword id="KW-0547">Nucleotide-binding</keyword>
<keyword id="KW-0548">Nucleotidyltransferase</keyword>
<keyword id="KW-1185">Reference proteome</keyword>
<keyword id="KW-0808">Transferase</keyword>